<sequence length="225" mass="25056">MTDYDRITANPHFDMLMSAHNHVQSTTQSALVPMVVEQSARGERSFDIFSRLLRERVIFLTGQVEDHMANLIVAQLLFLEAENPDKDIHLYINSPGGSVSAGLAIFDTMNFIKPEVSTICMGGAYSMGSFLLAAGQKGKRYALANARVMIHQPSGGAQGQATDIEINAREILKTRARLNEILAERTGQSVEKIEKDVERDYWLDAKEAKEYGLIDEVLERRPASL</sequence>
<organism>
    <name type="scientific">Psychrobacter arcticus (strain DSM 17307 / VKM B-2377 / 273-4)</name>
    <dbReference type="NCBI Taxonomy" id="259536"/>
    <lineage>
        <taxon>Bacteria</taxon>
        <taxon>Pseudomonadati</taxon>
        <taxon>Pseudomonadota</taxon>
        <taxon>Gammaproteobacteria</taxon>
        <taxon>Moraxellales</taxon>
        <taxon>Moraxellaceae</taxon>
        <taxon>Psychrobacter</taxon>
    </lineage>
</organism>
<name>CLPP_PSYA2</name>
<protein>
    <recommendedName>
        <fullName evidence="1">ATP-dependent Clp protease proteolytic subunit</fullName>
        <ecNumber evidence="1">3.4.21.92</ecNumber>
    </recommendedName>
    <alternativeName>
        <fullName evidence="1">Endopeptidase Clp</fullName>
    </alternativeName>
</protein>
<comment type="function">
    <text evidence="1">Cleaves peptides in various proteins in a process that requires ATP hydrolysis. Has a chymotrypsin-like activity. Plays a major role in the degradation of misfolded proteins.</text>
</comment>
<comment type="catalytic activity">
    <reaction evidence="1">
        <text>Hydrolysis of proteins to small peptides in the presence of ATP and magnesium. alpha-casein is the usual test substrate. In the absence of ATP, only oligopeptides shorter than five residues are hydrolyzed (such as succinyl-Leu-Tyr-|-NHMec, and Leu-Tyr-Leu-|-Tyr-Trp, in which cleavage of the -Tyr-|-Leu- and -Tyr-|-Trp bonds also occurs).</text>
        <dbReference type="EC" id="3.4.21.92"/>
    </reaction>
</comment>
<comment type="subunit">
    <text evidence="1">Fourteen ClpP subunits assemble into 2 heptameric rings which stack back to back to give a disk-like structure with a central cavity, resembling the structure of eukaryotic proteasomes.</text>
</comment>
<comment type="subcellular location">
    <subcellularLocation>
        <location evidence="1">Cytoplasm</location>
    </subcellularLocation>
</comment>
<comment type="similarity">
    <text evidence="1">Belongs to the peptidase S14 family.</text>
</comment>
<gene>
    <name evidence="1" type="primary">clpP</name>
    <name type="ordered locus">Psyc_1941</name>
</gene>
<proteinExistence type="inferred from homology"/>
<keyword id="KW-0963">Cytoplasm</keyword>
<keyword id="KW-0378">Hydrolase</keyword>
<keyword id="KW-0645">Protease</keyword>
<keyword id="KW-1185">Reference proteome</keyword>
<keyword id="KW-0720">Serine protease</keyword>
<evidence type="ECO:0000255" key="1">
    <source>
        <dbReference type="HAMAP-Rule" id="MF_00444"/>
    </source>
</evidence>
<accession>Q4FQB9</accession>
<feature type="chain" id="PRO_0000226463" description="ATP-dependent Clp protease proteolytic subunit">
    <location>
        <begin position="1"/>
        <end position="225"/>
    </location>
</feature>
<feature type="active site" description="Nucleophile" evidence="1">
    <location>
        <position position="126"/>
    </location>
</feature>
<feature type="active site" evidence="1">
    <location>
        <position position="151"/>
    </location>
</feature>
<reference key="1">
    <citation type="journal article" date="2010" name="Appl. Environ. Microbiol.">
        <title>The genome sequence of Psychrobacter arcticus 273-4, a psychroactive Siberian permafrost bacterium, reveals mechanisms for adaptation to low-temperature growth.</title>
        <authorList>
            <person name="Ayala-del-Rio H.L."/>
            <person name="Chain P.S."/>
            <person name="Grzymski J.J."/>
            <person name="Ponder M.A."/>
            <person name="Ivanova N."/>
            <person name="Bergholz P.W."/>
            <person name="Di Bartolo G."/>
            <person name="Hauser L."/>
            <person name="Land M."/>
            <person name="Bakermans C."/>
            <person name="Rodrigues D."/>
            <person name="Klappenbach J."/>
            <person name="Zarka D."/>
            <person name="Larimer F."/>
            <person name="Richardson P."/>
            <person name="Murray A."/>
            <person name="Thomashow M."/>
            <person name="Tiedje J.M."/>
        </authorList>
    </citation>
    <scope>NUCLEOTIDE SEQUENCE [LARGE SCALE GENOMIC DNA]</scope>
    <source>
        <strain>DSM 17307 / VKM B-2377 / 273-4</strain>
    </source>
</reference>
<dbReference type="EC" id="3.4.21.92" evidence="1"/>
<dbReference type="EMBL" id="CP000082">
    <property type="protein sequence ID" value="AAZ19789.1"/>
    <property type="molecule type" value="Genomic_DNA"/>
</dbReference>
<dbReference type="RefSeq" id="WP_011281198.1">
    <property type="nucleotide sequence ID" value="NC_007204.1"/>
</dbReference>
<dbReference type="SMR" id="Q4FQB9"/>
<dbReference type="STRING" id="259536.Psyc_1941"/>
<dbReference type="MEROPS" id="S14.001"/>
<dbReference type="KEGG" id="par:Psyc_1941"/>
<dbReference type="eggNOG" id="COG0740">
    <property type="taxonomic scope" value="Bacteria"/>
</dbReference>
<dbReference type="HOGENOM" id="CLU_058707_3_3_6"/>
<dbReference type="OrthoDB" id="9802800at2"/>
<dbReference type="Proteomes" id="UP000000546">
    <property type="component" value="Chromosome"/>
</dbReference>
<dbReference type="GO" id="GO:0005737">
    <property type="term" value="C:cytoplasm"/>
    <property type="evidence" value="ECO:0007669"/>
    <property type="project" value="UniProtKB-SubCell"/>
</dbReference>
<dbReference type="GO" id="GO:0009368">
    <property type="term" value="C:endopeptidase Clp complex"/>
    <property type="evidence" value="ECO:0007669"/>
    <property type="project" value="TreeGrafter"/>
</dbReference>
<dbReference type="GO" id="GO:0004176">
    <property type="term" value="F:ATP-dependent peptidase activity"/>
    <property type="evidence" value="ECO:0007669"/>
    <property type="project" value="InterPro"/>
</dbReference>
<dbReference type="GO" id="GO:0051117">
    <property type="term" value="F:ATPase binding"/>
    <property type="evidence" value="ECO:0007669"/>
    <property type="project" value="TreeGrafter"/>
</dbReference>
<dbReference type="GO" id="GO:0004252">
    <property type="term" value="F:serine-type endopeptidase activity"/>
    <property type="evidence" value="ECO:0007669"/>
    <property type="project" value="UniProtKB-UniRule"/>
</dbReference>
<dbReference type="GO" id="GO:0006515">
    <property type="term" value="P:protein quality control for misfolded or incompletely synthesized proteins"/>
    <property type="evidence" value="ECO:0007669"/>
    <property type="project" value="TreeGrafter"/>
</dbReference>
<dbReference type="CDD" id="cd07017">
    <property type="entry name" value="S14_ClpP_2"/>
    <property type="match status" value="1"/>
</dbReference>
<dbReference type="FunFam" id="3.90.226.10:FF:000001">
    <property type="entry name" value="ATP-dependent Clp protease proteolytic subunit"/>
    <property type="match status" value="1"/>
</dbReference>
<dbReference type="Gene3D" id="3.90.226.10">
    <property type="entry name" value="2-enoyl-CoA Hydratase, Chain A, domain 1"/>
    <property type="match status" value="1"/>
</dbReference>
<dbReference type="HAMAP" id="MF_00444">
    <property type="entry name" value="ClpP"/>
    <property type="match status" value="1"/>
</dbReference>
<dbReference type="InterPro" id="IPR001907">
    <property type="entry name" value="ClpP"/>
</dbReference>
<dbReference type="InterPro" id="IPR029045">
    <property type="entry name" value="ClpP/crotonase-like_dom_sf"/>
</dbReference>
<dbReference type="InterPro" id="IPR023562">
    <property type="entry name" value="ClpP/TepA"/>
</dbReference>
<dbReference type="InterPro" id="IPR033135">
    <property type="entry name" value="ClpP_His_AS"/>
</dbReference>
<dbReference type="NCBIfam" id="TIGR00493">
    <property type="entry name" value="clpP"/>
    <property type="match status" value="1"/>
</dbReference>
<dbReference type="NCBIfam" id="NF001368">
    <property type="entry name" value="PRK00277.1"/>
    <property type="match status" value="1"/>
</dbReference>
<dbReference type="NCBIfam" id="NF009205">
    <property type="entry name" value="PRK12553.1"/>
    <property type="match status" value="1"/>
</dbReference>
<dbReference type="PANTHER" id="PTHR10381">
    <property type="entry name" value="ATP-DEPENDENT CLP PROTEASE PROTEOLYTIC SUBUNIT"/>
    <property type="match status" value="1"/>
</dbReference>
<dbReference type="PANTHER" id="PTHR10381:SF11">
    <property type="entry name" value="ATP-DEPENDENT CLP PROTEASE PROTEOLYTIC SUBUNIT, MITOCHONDRIAL"/>
    <property type="match status" value="1"/>
</dbReference>
<dbReference type="Pfam" id="PF00574">
    <property type="entry name" value="CLP_protease"/>
    <property type="match status" value="1"/>
</dbReference>
<dbReference type="PRINTS" id="PR00127">
    <property type="entry name" value="CLPPROTEASEP"/>
</dbReference>
<dbReference type="SUPFAM" id="SSF52096">
    <property type="entry name" value="ClpP/crotonase"/>
    <property type="match status" value="1"/>
</dbReference>
<dbReference type="PROSITE" id="PS00382">
    <property type="entry name" value="CLP_PROTEASE_HIS"/>
    <property type="match status" value="1"/>
</dbReference>